<sequence>MPKPVIAIVGRPNVGKSTIFNRIVGERVSIVEDIPGVTRDRIYSAGEWLNHEFNIIDTGGIDIGDEPFLTQIRQQAEVAIDEADVIIFMTNGRDGVTAADEEVAKILYRSNKPVVLAVNKVDNPEMRSDIYDFYALGFGEPFPISGTHGLGLGDLLDEAAQHFPKIEEDGYDEDTIRFSLIGRPNVGKSSLVNALLGQERVIVSNVAGTTRDAVDTPYSKDGKDYVIIDTAGMRKKGKVYESTEKYSVLRALRAIERSDVVLVVLDGEEGIIEQDKKIAGYAHDSGRAVVIVVNKWDAVKKDEKTMKAFEENIRAHFQFLEYAPIVFLSAKTRKRTQTLIPVIDEVNESHSIRIQTNVLNDVIMDAVAMNPTPTHNGSRLKIFYATQVAVKPPTFVVFVNDPELLHFSYERFLKNRLRESFGFVGTPIHIIARARD</sequence>
<reference key="1">
    <citation type="journal article" date="2003" name="Nature">
        <title>Genome sequence of Bacillus cereus and comparative analysis with Bacillus anthracis.</title>
        <authorList>
            <person name="Ivanova N."/>
            <person name="Sorokin A."/>
            <person name="Anderson I."/>
            <person name="Galleron N."/>
            <person name="Candelon B."/>
            <person name="Kapatral V."/>
            <person name="Bhattacharyya A."/>
            <person name="Reznik G."/>
            <person name="Mikhailova N."/>
            <person name="Lapidus A."/>
            <person name="Chu L."/>
            <person name="Mazur M."/>
            <person name="Goltsman E."/>
            <person name="Larsen N."/>
            <person name="D'Souza M."/>
            <person name="Walunas T."/>
            <person name="Grechkin Y."/>
            <person name="Pusch G."/>
            <person name="Haselkorn R."/>
            <person name="Fonstein M."/>
            <person name="Ehrlich S.D."/>
            <person name="Overbeek R."/>
            <person name="Kyrpides N.C."/>
        </authorList>
    </citation>
    <scope>NUCLEOTIDE SEQUENCE [LARGE SCALE GENOMIC DNA]</scope>
    <source>
        <strain>ATCC 14579 / DSM 31 / CCUG 7414 / JCM 2152 / NBRC 15305 / NCIMB 9373 / NCTC 2599 / NRRL B-3711</strain>
    </source>
</reference>
<keyword id="KW-0342">GTP-binding</keyword>
<keyword id="KW-0547">Nucleotide-binding</keyword>
<keyword id="KW-1185">Reference proteome</keyword>
<keyword id="KW-0677">Repeat</keyword>
<keyword id="KW-0690">Ribosome biogenesis</keyword>
<dbReference type="EMBL" id="AE016877">
    <property type="protein sequence ID" value="AAP08484.1"/>
    <property type="molecule type" value="Genomic_DNA"/>
</dbReference>
<dbReference type="RefSeq" id="NP_831283.1">
    <property type="nucleotide sequence ID" value="NC_004722.1"/>
</dbReference>
<dbReference type="RefSeq" id="WP_001125893.1">
    <property type="nucleotide sequence ID" value="NZ_CP138336.1"/>
</dbReference>
<dbReference type="SMR" id="Q81FR5"/>
<dbReference type="STRING" id="226900.BC_1504"/>
<dbReference type="GeneID" id="93009536"/>
<dbReference type="KEGG" id="bce:BC1504"/>
<dbReference type="PATRIC" id="fig|226900.8.peg.1481"/>
<dbReference type="HOGENOM" id="CLU_016077_6_2_9"/>
<dbReference type="OrthoDB" id="9805918at2"/>
<dbReference type="Proteomes" id="UP000001417">
    <property type="component" value="Chromosome"/>
</dbReference>
<dbReference type="GO" id="GO:0005525">
    <property type="term" value="F:GTP binding"/>
    <property type="evidence" value="ECO:0007669"/>
    <property type="project" value="UniProtKB-UniRule"/>
</dbReference>
<dbReference type="GO" id="GO:0043022">
    <property type="term" value="F:ribosome binding"/>
    <property type="evidence" value="ECO:0000318"/>
    <property type="project" value="GO_Central"/>
</dbReference>
<dbReference type="GO" id="GO:0042254">
    <property type="term" value="P:ribosome biogenesis"/>
    <property type="evidence" value="ECO:0007669"/>
    <property type="project" value="UniProtKB-KW"/>
</dbReference>
<dbReference type="CDD" id="cd01894">
    <property type="entry name" value="EngA1"/>
    <property type="match status" value="1"/>
</dbReference>
<dbReference type="CDD" id="cd01895">
    <property type="entry name" value="EngA2"/>
    <property type="match status" value="1"/>
</dbReference>
<dbReference type="FunFam" id="3.30.300.20:FF:000004">
    <property type="entry name" value="GTPase Der"/>
    <property type="match status" value="1"/>
</dbReference>
<dbReference type="FunFam" id="3.40.50.300:FF:000040">
    <property type="entry name" value="GTPase Der"/>
    <property type="match status" value="1"/>
</dbReference>
<dbReference type="FunFam" id="3.40.50.300:FF:000057">
    <property type="entry name" value="GTPase Der"/>
    <property type="match status" value="1"/>
</dbReference>
<dbReference type="Gene3D" id="3.30.300.20">
    <property type="match status" value="1"/>
</dbReference>
<dbReference type="Gene3D" id="3.40.50.300">
    <property type="entry name" value="P-loop containing nucleotide triphosphate hydrolases"/>
    <property type="match status" value="2"/>
</dbReference>
<dbReference type="HAMAP" id="MF_00195">
    <property type="entry name" value="GTPase_Der"/>
    <property type="match status" value="1"/>
</dbReference>
<dbReference type="InterPro" id="IPR031166">
    <property type="entry name" value="G_ENGA"/>
</dbReference>
<dbReference type="InterPro" id="IPR006073">
    <property type="entry name" value="GTP-bd"/>
</dbReference>
<dbReference type="InterPro" id="IPR016484">
    <property type="entry name" value="GTPase_Der"/>
</dbReference>
<dbReference type="InterPro" id="IPR032859">
    <property type="entry name" value="KH_dom-like"/>
</dbReference>
<dbReference type="InterPro" id="IPR015946">
    <property type="entry name" value="KH_dom-like_a/b"/>
</dbReference>
<dbReference type="InterPro" id="IPR027417">
    <property type="entry name" value="P-loop_NTPase"/>
</dbReference>
<dbReference type="InterPro" id="IPR005225">
    <property type="entry name" value="Small_GTP-bd"/>
</dbReference>
<dbReference type="NCBIfam" id="TIGR03594">
    <property type="entry name" value="GTPase_EngA"/>
    <property type="match status" value="1"/>
</dbReference>
<dbReference type="NCBIfam" id="TIGR00231">
    <property type="entry name" value="small_GTP"/>
    <property type="match status" value="2"/>
</dbReference>
<dbReference type="PANTHER" id="PTHR43834">
    <property type="entry name" value="GTPASE DER"/>
    <property type="match status" value="1"/>
</dbReference>
<dbReference type="PANTHER" id="PTHR43834:SF6">
    <property type="entry name" value="GTPASE DER"/>
    <property type="match status" value="1"/>
</dbReference>
<dbReference type="Pfam" id="PF14714">
    <property type="entry name" value="KH_dom-like"/>
    <property type="match status" value="1"/>
</dbReference>
<dbReference type="Pfam" id="PF01926">
    <property type="entry name" value="MMR_HSR1"/>
    <property type="match status" value="2"/>
</dbReference>
<dbReference type="PIRSF" id="PIRSF006485">
    <property type="entry name" value="GTP-binding_EngA"/>
    <property type="match status" value="1"/>
</dbReference>
<dbReference type="PRINTS" id="PR00326">
    <property type="entry name" value="GTP1OBG"/>
</dbReference>
<dbReference type="SUPFAM" id="SSF52540">
    <property type="entry name" value="P-loop containing nucleoside triphosphate hydrolases"/>
    <property type="match status" value="2"/>
</dbReference>
<dbReference type="PROSITE" id="PS51712">
    <property type="entry name" value="G_ENGA"/>
    <property type="match status" value="2"/>
</dbReference>
<protein>
    <recommendedName>
        <fullName evidence="1">GTPase Der</fullName>
    </recommendedName>
    <alternativeName>
        <fullName evidence="1">GTP-binding protein EngA</fullName>
    </alternativeName>
</protein>
<organism>
    <name type="scientific">Bacillus cereus (strain ATCC 14579 / DSM 31 / CCUG 7414 / JCM 2152 / NBRC 15305 / NCIMB 9373 / NCTC 2599 / NRRL B-3711)</name>
    <dbReference type="NCBI Taxonomy" id="226900"/>
    <lineage>
        <taxon>Bacteria</taxon>
        <taxon>Bacillati</taxon>
        <taxon>Bacillota</taxon>
        <taxon>Bacilli</taxon>
        <taxon>Bacillales</taxon>
        <taxon>Bacillaceae</taxon>
        <taxon>Bacillus</taxon>
        <taxon>Bacillus cereus group</taxon>
    </lineage>
</organism>
<name>DER_BACCR</name>
<comment type="function">
    <text evidence="1">GTPase that plays an essential role in the late steps of ribosome biogenesis.</text>
</comment>
<comment type="subunit">
    <text evidence="1">Associates with the 50S ribosomal subunit.</text>
</comment>
<comment type="similarity">
    <text evidence="1">Belongs to the TRAFAC class TrmE-Era-EngA-EngB-Septin-like GTPase superfamily. EngA (Der) GTPase family.</text>
</comment>
<gene>
    <name evidence="1" type="primary">der</name>
    <name type="synonym">engA</name>
    <name type="ordered locus">BC_1504</name>
</gene>
<accession>Q81FR5</accession>
<evidence type="ECO:0000255" key="1">
    <source>
        <dbReference type="HAMAP-Rule" id="MF_00195"/>
    </source>
</evidence>
<feature type="chain" id="PRO_0000178962" description="GTPase Der">
    <location>
        <begin position="1"/>
        <end position="436"/>
    </location>
</feature>
<feature type="domain" description="EngA-type G 1">
    <location>
        <begin position="4"/>
        <end position="167"/>
    </location>
</feature>
<feature type="domain" description="EngA-type G 2">
    <location>
        <begin position="176"/>
        <end position="351"/>
    </location>
</feature>
<feature type="domain" description="KH-like" evidence="1">
    <location>
        <begin position="352"/>
        <end position="436"/>
    </location>
</feature>
<feature type="binding site" evidence="1">
    <location>
        <begin position="10"/>
        <end position="17"/>
    </location>
    <ligand>
        <name>GTP</name>
        <dbReference type="ChEBI" id="CHEBI:37565"/>
        <label>1</label>
    </ligand>
</feature>
<feature type="binding site" evidence="1">
    <location>
        <begin position="57"/>
        <end position="61"/>
    </location>
    <ligand>
        <name>GTP</name>
        <dbReference type="ChEBI" id="CHEBI:37565"/>
        <label>1</label>
    </ligand>
</feature>
<feature type="binding site" evidence="1">
    <location>
        <begin position="119"/>
        <end position="122"/>
    </location>
    <ligand>
        <name>GTP</name>
        <dbReference type="ChEBI" id="CHEBI:37565"/>
        <label>1</label>
    </ligand>
</feature>
<feature type="binding site" evidence="1">
    <location>
        <begin position="182"/>
        <end position="189"/>
    </location>
    <ligand>
        <name>GTP</name>
        <dbReference type="ChEBI" id="CHEBI:37565"/>
        <label>2</label>
    </ligand>
</feature>
<feature type="binding site" evidence="1">
    <location>
        <begin position="229"/>
        <end position="233"/>
    </location>
    <ligand>
        <name>GTP</name>
        <dbReference type="ChEBI" id="CHEBI:37565"/>
        <label>2</label>
    </ligand>
</feature>
<feature type="binding site" evidence="1">
    <location>
        <begin position="294"/>
        <end position="297"/>
    </location>
    <ligand>
        <name>GTP</name>
        <dbReference type="ChEBI" id="CHEBI:37565"/>
        <label>2</label>
    </ligand>
</feature>
<proteinExistence type="inferred from homology"/>